<keyword id="KW-0007">Acetylation</keyword>
<keyword id="KW-0903">Direct protein sequencing</keyword>
<keyword id="KW-0349">Heme</keyword>
<keyword id="KW-0408">Iron</keyword>
<keyword id="KW-0479">Metal-binding</keyword>
<keyword id="KW-0561">Oxygen transport</keyword>
<keyword id="KW-1185">Reference proteome</keyword>
<keyword id="KW-0813">Transport</keyword>
<gene>
    <name type="primary">hba</name>
</gene>
<reference key="1">
    <citation type="journal article" date="1984" name="Biochim. Biophys. Acta">
        <title>Cloning and sequence analysis of a cDNA for the alpha-globin mRNA of carp, Cyprinus carpio.</title>
        <authorList>
            <person name="Takeshita S."/>
            <person name="Aoki T."/>
            <person name="Fukumaki Y."/>
            <person name="Takagi Y."/>
        </authorList>
    </citation>
    <scope>NUCLEOTIDE SEQUENCE [MRNA]</scope>
</reference>
<reference key="2">
    <citation type="journal article" date="1968" name="Hoppe-Seyler's Z. Physiol. Chem.">
        <title>Hemoglobin, XVI. Amino acid sequence of the alpha-chain of both main components of carp hemoglobin.</title>
        <authorList>
            <person name="Hilse K."/>
            <person name="Braunitzer G."/>
        </authorList>
    </citation>
    <scope>PROTEIN SEQUENCE OF 2-143</scope>
    <scope>ACETYLATION AT SER-2</scope>
</reference>
<comment type="function">
    <text>Involved in oxygen transport from gills to the various peripheral tissues.</text>
</comment>
<comment type="subunit">
    <text>Heterotetramer of two alpha chains and two beta chains.</text>
</comment>
<comment type="tissue specificity">
    <text>Red blood cells.</text>
</comment>
<comment type="similarity">
    <text evidence="1">Belongs to the globin family.</text>
</comment>
<name>HBA_CYPCA</name>
<protein>
    <recommendedName>
        <fullName>Hemoglobin subunit alpha</fullName>
    </recommendedName>
    <alternativeName>
        <fullName>Alpha-globin</fullName>
    </alternativeName>
    <alternativeName>
        <fullName>Hemoglobin alpha chain</fullName>
    </alternativeName>
</protein>
<dbReference type="EMBL" id="M25643">
    <property type="protein sequence ID" value="AAA49202.1"/>
    <property type="molecule type" value="mRNA"/>
</dbReference>
<dbReference type="PIR" id="I50491">
    <property type="entry name" value="HACA"/>
</dbReference>
<dbReference type="SMR" id="P02016"/>
<dbReference type="iPTMnet" id="P02016"/>
<dbReference type="Proteomes" id="UP000694384">
    <property type="component" value="Unplaced"/>
</dbReference>
<dbReference type="Proteomes" id="UP000694427">
    <property type="component" value="Unplaced"/>
</dbReference>
<dbReference type="Proteomes" id="UP000694700">
    <property type="component" value="Unplaced"/>
</dbReference>
<dbReference type="Proteomes" id="UP000694701">
    <property type="component" value="Unplaced"/>
</dbReference>
<dbReference type="Proteomes" id="UP001155660">
    <property type="component" value="Unplaced"/>
</dbReference>
<dbReference type="GO" id="GO:0072562">
    <property type="term" value="C:blood microparticle"/>
    <property type="evidence" value="ECO:0007669"/>
    <property type="project" value="TreeGrafter"/>
</dbReference>
<dbReference type="GO" id="GO:0031838">
    <property type="term" value="C:haptoglobin-hemoglobin complex"/>
    <property type="evidence" value="ECO:0007669"/>
    <property type="project" value="TreeGrafter"/>
</dbReference>
<dbReference type="GO" id="GO:0005833">
    <property type="term" value="C:hemoglobin complex"/>
    <property type="evidence" value="ECO:0007669"/>
    <property type="project" value="InterPro"/>
</dbReference>
<dbReference type="GO" id="GO:0031720">
    <property type="term" value="F:haptoglobin binding"/>
    <property type="evidence" value="ECO:0007669"/>
    <property type="project" value="TreeGrafter"/>
</dbReference>
<dbReference type="GO" id="GO:0020037">
    <property type="term" value="F:heme binding"/>
    <property type="evidence" value="ECO:0007669"/>
    <property type="project" value="InterPro"/>
</dbReference>
<dbReference type="GO" id="GO:0005506">
    <property type="term" value="F:iron ion binding"/>
    <property type="evidence" value="ECO:0007669"/>
    <property type="project" value="InterPro"/>
</dbReference>
<dbReference type="GO" id="GO:0043177">
    <property type="term" value="F:organic acid binding"/>
    <property type="evidence" value="ECO:0007669"/>
    <property type="project" value="TreeGrafter"/>
</dbReference>
<dbReference type="GO" id="GO:0019825">
    <property type="term" value="F:oxygen binding"/>
    <property type="evidence" value="ECO:0007669"/>
    <property type="project" value="InterPro"/>
</dbReference>
<dbReference type="GO" id="GO:0005344">
    <property type="term" value="F:oxygen carrier activity"/>
    <property type="evidence" value="ECO:0007669"/>
    <property type="project" value="UniProtKB-KW"/>
</dbReference>
<dbReference type="GO" id="GO:0004601">
    <property type="term" value="F:peroxidase activity"/>
    <property type="evidence" value="ECO:0007669"/>
    <property type="project" value="TreeGrafter"/>
</dbReference>
<dbReference type="GO" id="GO:0042744">
    <property type="term" value="P:hydrogen peroxide catabolic process"/>
    <property type="evidence" value="ECO:0007669"/>
    <property type="project" value="TreeGrafter"/>
</dbReference>
<dbReference type="CDD" id="cd08927">
    <property type="entry name" value="Hb-alpha-like"/>
    <property type="match status" value="1"/>
</dbReference>
<dbReference type="FunFam" id="1.10.490.10:FF:000002">
    <property type="entry name" value="Hemoglobin subunit alpha"/>
    <property type="match status" value="1"/>
</dbReference>
<dbReference type="Gene3D" id="1.10.490.10">
    <property type="entry name" value="Globins"/>
    <property type="match status" value="1"/>
</dbReference>
<dbReference type="InterPro" id="IPR000971">
    <property type="entry name" value="Globin"/>
</dbReference>
<dbReference type="InterPro" id="IPR009050">
    <property type="entry name" value="Globin-like_sf"/>
</dbReference>
<dbReference type="InterPro" id="IPR012292">
    <property type="entry name" value="Globin/Proto"/>
</dbReference>
<dbReference type="InterPro" id="IPR002338">
    <property type="entry name" value="Hemoglobin_a-typ"/>
</dbReference>
<dbReference type="InterPro" id="IPR050056">
    <property type="entry name" value="Hemoglobin_oxygen_transport"/>
</dbReference>
<dbReference type="InterPro" id="IPR002339">
    <property type="entry name" value="Hemoglobin_pi"/>
</dbReference>
<dbReference type="PANTHER" id="PTHR11442:SF93">
    <property type="entry name" value="ALPHA GLOBIN-LIKE-RELATED"/>
    <property type="match status" value="1"/>
</dbReference>
<dbReference type="PANTHER" id="PTHR11442">
    <property type="entry name" value="HEMOGLOBIN FAMILY MEMBER"/>
    <property type="match status" value="1"/>
</dbReference>
<dbReference type="Pfam" id="PF00042">
    <property type="entry name" value="Globin"/>
    <property type="match status" value="1"/>
</dbReference>
<dbReference type="PRINTS" id="PR00612">
    <property type="entry name" value="ALPHAHAEM"/>
</dbReference>
<dbReference type="PRINTS" id="PR00815">
    <property type="entry name" value="PIHAEM"/>
</dbReference>
<dbReference type="SUPFAM" id="SSF46458">
    <property type="entry name" value="Globin-like"/>
    <property type="match status" value="1"/>
</dbReference>
<dbReference type="PROSITE" id="PS01033">
    <property type="entry name" value="GLOBIN"/>
    <property type="match status" value="1"/>
</dbReference>
<proteinExistence type="evidence at protein level"/>
<sequence>MSLSDKDKAAVKGLWAKISPKADDIGAEALGRMLTVYPQTKTYFAHWADLSPGSGPVKKHGKVIMGAVGDAVSKIDDLVGGLAALSELHAFKLRVDPANFKILAHNVIVVIGMLYPGDFPPEVHMSVDKFFQNLALALSEKYR</sequence>
<feature type="initiator methionine" description="Removed" evidence="2">
    <location>
        <position position="1"/>
    </location>
</feature>
<feature type="chain" id="PRO_0000052615" description="Hemoglobin subunit alpha">
    <location>
        <begin position="2"/>
        <end position="143"/>
    </location>
</feature>
<feature type="domain" description="Globin" evidence="1">
    <location>
        <begin position="2"/>
        <end position="143"/>
    </location>
</feature>
<feature type="binding site" evidence="1">
    <location>
        <position position="60"/>
    </location>
    <ligand>
        <name>O2</name>
        <dbReference type="ChEBI" id="CHEBI:15379"/>
    </ligand>
</feature>
<feature type="binding site" description="proximal binding residue" evidence="1">
    <location>
        <position position="89"/>
    </location>
    <ligand>
        <name>heme b</name>
        <dbReference type="ChEBI" id="CHEBI:60344"/>
    </ligand>
    <ligandPart>
        <name>Fe</name>
        <dbReference type="ChEBI" id="CHEBI:18248"/>
    </ligandPart>
</feature>
<feature type="modified residue" description="N-acetylserine" evidence="2">
    <location>
        <position position="2"/>
    </location>
</feature>
<feature type="sequence conflict" description="In Ref. 2; AA sequence." evidence="3" ref="2">
    <original>GL</original>
    <variation>IA</variation>
    <location>
        <begin position="13"/>
        <end position="14"/>
    </location>
</feature>
<feature type="sequence conflict" description="In Ref. 2; AA sequence." evidence="3" ref="2">
    <original>KHG</original>
    <variation>HGK</variation>
    <location>
        <begin position="59"/>
        <end position="61"/>
    </location>
</feature>
<feature type="sequence conflict" description="In Ref. 2; AA sequence." evidence="3" ref="2">
    <original>A</original>
    <variation>S</variation>
    <location>
        <position position="84"/>
    </location>
</feature>
<feature type="sequence conflict" description="In Ref. 2; AA sequence." evidence="3" ref="2">
    <original>F</original>
    <variation>S</variation>
    <location>
        <position position="91"/>
    </location>
</feature>
<feature type="sequence conflict" description="In Ref. 2; AA sequence." evidence="3" ref="2">
    <original>HNVIVVIGMLY</original>
    <variation>NHIVVGIMFYL</variation>
    <location>
        <begin position="105"/>
        <end position="115"/>
    </location>
</feature>
<accession>P02016</accession>
<organism>
    <name type="scientific">Cyprinus carpio</name>
    <name type="common">Common carp</name>
    <dbReference type="NCBI Taxonomy" id="7962"/>
    <lineage>
        <taxon>Eukaryota</taxon>
        <taxon>Metazoa</taxon>
        <taxon>Chordata</taxon>
        <taxon>Craniata</taxon>
        <taxon>Vertebrata</taxon>
        <taxon>Euteleostomi</taxon>
        <taxon>Actinopterygii</taxon>
        <taxon>Neopterygii</taxon>
        <taxon>Teleostei</taxon>
        <taxon>Ostariophysi</taxon>
        <taxon>Cypriniformes</taxon>
        <taxon>Cyprinidae</taxon>
        <taxon>Cyprininae</taxon>
        <taxon>Cyprinus</taxon>
    </lineage>
</organism>
<evidence type="ECO:0000255" key="1">
    <source>
        <dbReference type="PROSITE-ProRule" id="PRU00238"/>
    </source>
</evidence>
<evidence type="ECO:0000269" key="2">
    <source>
    </source>
</evidence>
<evidence type="ECO:0000305" key="3"/>